<reference key="1">
    <citation type="journal article" date="2000" name="Biosci. Biotechnol. Biochem.">
        <title>Cloning and expression of bovine imc-415 cDNA from mammary gland.</title>
        <authorList>
            <person name="Ha S."/>
            <person name="Baik M."/>
            <person name="Choi Y."/>
        </authorList>
    </citation>
    <scope>NUCLEOTIDE SEQUENCE [MRNA]</scope>
    <source>
        <strain>Holstein</strain>
        <tissue>Mammary gland</tissue>
    </source>
</reference>
<reference key="2">
    <citation type="submission" date="2005-11" db="EMBL/GenBank/DDBJ databases">
        <authorList>
            <consortium name="NIH - Mammalian Gene Collection (MGC) project"/>
        </authorList>
    </citation>
    <scope>NUCLEOTIDE SEQUENCE [LARGE SCALE MRNA]</scope>
    <source>
        <strain>Crossbred X Angus</strain>
        <tissue>Liver</tissue>
    </source>
</reference>
<protein>
    <recommendedName>
        <fullName evidence="3">Eukaryotic translation initiation factor 6</fullName>
        <shortName evidence="3">eIF-6</shortName>
    </recommendedName>
    <alternativeName>
        <fullName>Imc-415 homolog</fullName>
    </alternativeName>
</protein>
<organism>
    <name type="scientific">Bos taurus</name>
    <name type="common">Bovine</name>
    <dbReference type="NCBI Taxonomy" id="9913"/>
    <lineage>
        <taxon>Eukaryota</taxon>
        <taxon>Metazoa</taxon>
        <taxon>Chordata</taxon>
        <taxon>Craniata</taxon>
        <taxon>Vertebrata</taxon>
        <taxon>Euteleostomi</taxon>
        <taxon>Mammalia</taxon>
        <taxon>Eutheria</taxon>
        <taxon>Laurasiatheria</taxon>
        <taxon>Artiodactyla</taxon>
        <taxon>Ruminantia</taxon>
        <taxon>Pecora</taxon>
        <taxon>Bovidae</taxon>
        <taxon>Bovinae</taxon>
        <taxon>Bos</taxon>
    </lineage>
</organism>
<dbReference type="EMBL" id="AF141872">
    <property type="protein sequence ID" value="AAF00595.1"/>
    <property type="molecule type" value="mRNA"/>
</dbReference>
<dbReference type="EMBL" id="BC109922">
    <property type="protein sequence ID" value="AAI09923.1"/>
    <property type="molecule type" value="mRNA"/>
</dbReference>
<dbReference type="PIR" id="JC7273">
    <property type="entry name" value="JC7273"/>
</dbReference>
<dbReference type="RefSeq" id="NP_777255.1">
    <property type="nucleotide sequence ID" value="NM_174830.1"/>
</dbReference>
<dbReference type="RefSeq" id="XP_005214560.1">
    <property type="nucleotide sequence ID" value="XM_005214503.5"/>
</dbReference>
<dbReference type="SMR" id="Q9TU47"/>
<dbReference type="FunCoup" id="Q9TU47">
    <property type="interactions" value="2995"/>
</dbReference>
<dbReference type="IntAct" id="Q9TU47">
    <property type="interactions" value="2"/>
</dbReference>
<dbReference type="STRING" id="9913.ENSBTAP00000014966"/>
<dbReference type="PaxDb" id="9913-ENSBTAP00000014966"/>
<dbReference type="Ensembl" id="ENSBTAT00000076570.2">
    <property type="protein sequence ID" value="ENSBTAP00000062338.1"/>
    <property type="gene ID" value="ENSBTAG00000011263.6"/>
</dbReference>
<dbReference type="GeneID" id="286811"/>
<dbReference type="KEGG" id="bta:286811"/>
<dbReference type="CTD" id="3692"/>
<dbReference type="VEuPathDB" id="HostDB:ENSBTAG00000011263"/>
<dbReference type="VGNC" id="VGNC:57006">
    <property type="gene designation" value="EIF6"/>
</dbReference>
<dbReference type="eggNOG" id="KOG3185">
    <property type="taxonomic scope" value="Eukaryota"/>
</dbReference>
<dbReference type="GeneTree" id="ENSGT00390000015972"/>
<dbReference type="HOGENOM" id="CLU_071894_0_0_1"/>
<dbReference type="InParanoid" id="Q9TU47"/>
<dbReference type="OMA" id="WCAFCGM"/>
<dbReference type="OrthoDB" id="4155914at2759"/>
<dbReference type="TreeFam" id="TF105396"/>
<dbReference type="Proteomes" id="UP000009136">
    <property type="component" value="Chromosome 13"/>
</dbReference>
<dbReference type="Bgee" id="ENSBTAG00000011263">
    <property type="expression patterns" value="Expressed in esophagus and 107 other cell types or tissues"/>
</dbReference>
<dbReference type="GO" id="GO:0005829">
    <property type="term" value="C:cytosol"/>
    <property type="evidence" value="ECO:0000318"/>
    <property type="project" value="GO_Central"/>
</dbReference>
<dbReference type="GO" id="GO:0005730">
    <property type="term" value="C:nucleolus"/>
    <property type="evidence" value="ECO:0007669"/>
    <property type="project" value="UniProtKB-SubCell"/>
</dbReference>
<dbReference type="GO" id="GO:0005634">
    <property type="term" value="C:nucleus"/>
    <property type="evidence" value="ECO:0000318"/>
    <property type="project" value="GO_Central"/>
</dbReference>
<dbReference type="GO" id="GO:0043023">
    <property type="term" value="F:ribosomal large subunit binding"/>
    <property type="evidence" value="ECO:0000318"/>
    <property type="project" value="GO_Central"/>
</dbReference>
<dbReference type="GO" id="GO:0003743">
    <property type="term" value="F:translation initiation factor activity"/>
    <property type="evidence" value="ECO:0007669"/>
    <property type="project" value="UniProtKB-UniRule"/>
</dbReference>
<dbReference type="GO" id="GO:1902626">
    <property type="term" value="P:assembly of large subunit precursor of preribosome"/>
    <property type="evidence" value="ECO:0000318"/>
    <property type="project" value="GO_Central"/>
</dbReference>
<dbReference type="GO" id="GO:0042256">
    <property type="term" value="P:cytosolic ribosome assembly"/>
    <property type="evidence" value="ECO:0007669"/>
    <property type="project" value="UniProtKB-UniRule"/>
</dbReference>
<dbReference type="GO" id="GO:0000460">
    <property type="term" value="P:maturation of 5.8S rRNA"/>
    <property type="evidence" value="ECO:0000318"/>
    <property type="project" value="GO_Central"/>
</dbReference>
<dbReference type="GO" id="GO:0000470">
    <property type="term" value="P:maturation of LSU-rRNA"/>
    <property type="evidence" value="ECO:0000318"/>
    <property type="project" value="GO_Central"/>
</dbReference>
<dbReference type="GO" id="GO:0035278">
    <property type="term" value="P:miRNA-mediated gene silencing by inhibition of translation"/>
    <property type="evidence" value="ECO:0000250"/>
    <property type="project" value="UniProtKB"/>
</dbReference>
<dbReference type="GO" id="GO:0035195">
    <property type="term" value="P:miRNA-mediated post-transcriptional gene silencing"/>
    <property type="evidence" value="ECO:0000250"/>
    <property type="project" value="UniProtKB"/>
</dbReference>
<dbReference type="GO" id="GO:0045727">
    <property type="term" value="P:positive regulation of translation"/>
    <property type="evidence" value="ECO:0000250"/>
    <property type="project" value="UniProtKB"/>
</dbReference>
<dbReference type="GO" id="GO:0042304">
    <property type="term" value="P:regulation of fatty acid biosynthetic process"/>
    <property type="evidence" value="ECO:0000250"/>
    <property type="project" value="UniProtKB"/>
</dbReference>
<dbReference type="GO" id="GO:0006110">
    <property type="term" value="P:regulation of glycolytic process"/>
    <property type="evidence" value="ECO:0000250"/>
    <property type="project" value="UniProtKB"/>
</dbReference>
<dbReference type="GO" id="GO:0045652">
    <property type="term" value="P:regulation of megakaryocyte differentiation"/>
    <property type="evidence" value="ECO:0000250"/>
    <property type="project" value="UniProtKB"/>
</dbReference>
<dbReference type="GO" id="GO:2000377">
    <property type="term" value="P:regulation of reactive oxygen species metabolic process"/>
    <property type="evidence" value="ECO:0000250"/>
    <property type="project" value="UniProtKB"/>
</dbReference>
<dbReference type="GO" id="GO:0032868">
    <property type="term" value="P:response to insulin"/>
    <property type="evidence" value="ECO:0000250"/>
    <property type="project" value="UniProtKB"/>
</dbReference>
<dbReference type="GO" id="GO:0000054">
    <property type="term" value="P:ribosomal subunit export from nucleus"/>
    <property type="evidence" value="ECO:0000318"/>
    <property type="project" value="GO_Central"/>
</dbReference>
<dbReference type="CDD" id="cd00527">
    <property type="entry name" value="IF6"/>
    <property type="match status" value="1"/>
</dbReference>
<dbReference type="FunFam" id="3.75.10.10:FF:000001">
    <property type="entry name" value="Eukaryotic translation initiation factor 6"/>
    <property type="match status" value="1"/>
</dbReference>
<dbReference type="Gene3D" id="3.75.10.10">
    <property type="entry name" value="L-arginine/glycine Amidinotransferase, Chain A"/>
    <property type="match status" value="1"/>
</dbReference>
<dbReference type="HAMAP" id="MF_00032">
    <property type="entry name" value="eIF_6"/>
    <property type="match status" value="1"/>
</dbReference>
<dbReference type="InterPro" id="IPR002769">
    <property type="entry name" value="eIF6"/>
</dbReference>
<dbReference type="NCBIfam" id="TIGR00323">
    <property type="entry name" value="eIF-6"/>
    <property type="match status" value="1"/>
</dbReference>
<dbReference type="PANTHER" id="PTHR10784">
    <property type="entry name" value="TRANSLATION INITIATION FACTOR 6"/>
    <property type="match status" value="1"/>
</dbReference>
<dbReference type="Pfam" id="PF01912">
    <property type="entry name" value="eIF-6"/>
    <property type="match status" value="1"/>
</dbReference>
<dbReference type="PIRSF" id="PIRSF006413">
    <property type="entry name" value="IF-6"/>
    <property type="match status" value="1"/>
</dbReference>
<dbReference type="SMART" id="SM00654">
    <property type="entry name" value="eIF6"/>
    <property type="match status" value="1"/>
</dbReference>
<dbReference type="SUPFAM" id="SSF55909">
    <property type="entry name" value="Pentein"/>
    <property type="match status" value="1"/>
</dbReference>
<proteinExistence type="evidence at transcript level"/>
<comment type="function">
    <text evidence="1 2 3">Binds to the 60S ribosomal subunit and prevents its association with the 40S ribosomal subunit to form the 80S initiation complex in the cytoplasm. Behaves as a stimulatory translation initiation factor downstream insulin/growth factors. Is also involved in ribosome biogenesis. Associates with pre-60S subunits in the nucleus and is involved in its nuclear export. Cytoplasmic release of TIF6 from 60S subunits and nuclear relocalization is promoted by a RACK1 (RACK1)-dependent protein kinase C activity (By similarity). In tissues responsive to insulin, controls fatty acid synthesis and glycolysis by exerting translational control of adipogenic transcription factors such as CEBPB, CEBPD and ATF4 that have G/C rich or uORF in their 5'UTR. Required for ROS-dependent megakaryocyte maturation and platelets formation, controls the expression of mitochondrial respiratory chain genes involved in reactive oxygen species (ROS) synthesis (By similarity). Involved in miRNA-mediated gene silencing by the RNA-induced silencing complex (RISC). Required for both miRNA-mediated translational repression and miRNA-mediated cleavage of complementary mRNAs by RISC (By similarity). Modulates cell cycle progression and global translation of pre-B cells, its activation seems to be rate-limiting in tumorigenesis and tumor growth (By similarity).</text>
</comment>
<comment type="subunit">
    <text evidence="2 3">Monomer. Associates with the 60S ribosomal subunit. Interacts with RACK1 (By similarity). Interacts with DICER1, AGO2, TARBP2, MOV10 and RPL7A; they form a large RNA-induced silencing complex (RISC) (By similarity).</text>
</comment>
<comment type="subcellular location">
    <subcellularLocation>
        <location evidence="3">Cytoplasm</location>
    </subcellularLocation>
    <subcellularLocation>
        <location evidence="3">Nucleus</location>
        <location evidence="3">Nucleolus</location>
    </subcellularLocation>
    <text evidence="3">Shuttles between cytoplasm and nucleus/nucleolus.</text>
</comment>
<comment type="PTM">
    <text evidence="2">Phosphorylation at Ser-174 and Ser-175 by CSNK1D/CK1 promotes nuclear export.</text>
</comment>
<comment type="PTM">
    <text evidence="1">Ufmylated by UFL1.</text>
</comment>
<comment type="similarity">
    <text evidence="3">Belongs to the eIF-6 family.</text>
</comment>
<feature type="chain" id="PRO_0000259426" description="Eukaryotic translation initiation factor 6">
    <location>
        <begin position="1"/>
        <end position="245"/>
    </location>
</feature>
<feature type="modified residue" description="Phosphotyrosine" evidence="2">
    <location>
        <position position="113"/>
    </location>
</feature>
<feature type="modified residue" description="Phosphothreonine" evidence="1 3">
    <location>
        <position position="165"/>
    </location>
</feature>
<feature type="modified residue" description="Phosphoserine" evidence="1 3">
    <location>
        <position position="166"/>
    </location>
</feature>
<feature type="modified residue" description="Phosphoserine; by CK1" evidence="2 3">
    <location>
        <position position="174"/>
    </location>
</feature>
<feature type="modified residue" description="Phosphoserine; by CK1" evidence="2 3">
    <location>
        <position position="175"/>
    </location>
</feature>
<feature type="modified residue" description="Phosphoserine; by PKC" evidence="2 3">
    <location>
        <position position="235"/>
    </location>
</feature>
<feature type="modified residue" description="Phosphoserine" evidence="2 3">
    <location>
        <position position="239"/>
    </location>
</feature>
<feature type="modified residue" description="Phosphoserine" evidence="2 3">
    <location>
        <position position="243"/>
    </location>
</feature>
<feature type="sequence conflict" description="In Ref. 1; AAF00595." evidence="4" ref="1">
    <original>T</original>
    <variation>K</variation>
    <location>
        <position position="141"/>
    </location>
</feature>
<feature type="sequence conflict" description="In Ref. 1; AAF00595." evidence="4" ref="1">
    <original>V</original>
    <variation>A</variation>
    <location>
        <position position="198"/>
    </location>
</feature>
<feature type="sequence conflict" description="In Ref. 1; AAF00595." evidence="4" ref="1">
    <original>T</original>
    <variation>A</variation>
    <location>
        <position position="210"/>
    </location>
</feature>
<feature type="sequence conflict" description="In Ref. 1; AAF00595." evidence="4" ref="1">
    <original>FKL</original>
    <variation>SKP</variation>
    <location>
        <begin position="222"/>
        <end position="224"/>
    </location>
</feature>
<feature type="sequence conflict" description="In Ref. 1; AAF00595." evidence="4" ref="1">
    <original>I</original>
    <variation>T</variation>
    <location>
        <position position="241"/>
    </location>
</feature>
<name>IF6_BOVIN</name>
<evidence type="ECO:0000250" key="1">
    <source>
        <dbReference type="UniProtKB" id="O55135"/>
    </source>
</evidence>
<evidence type="ECO:0000250" key="2">
    <source>
        <dbReference type="UniProtKB" id="P56537"/>
    </source>
</evidence>
<evidence type="ECO:0000255" key="3">
    <source>
        <dbReference type="HAMAP-Rule" id="MF_03132"/>
    </source>
</evidence>
<evidence type="ECO:0000305" key="4"/>
<keyword id="KW-0963">Cytoplasm</keyword>
<keyword id="KW-0396">Initiation factor</keyword>
<keyword id="KW-0539">Nucleus</keyword>
<keyword id="KW-0597">Phosphoprotein</keyword>
<keyword id="KW-0648">Protein biosynthesis</keyword>
<keyword id="KW-1185">Reference proteome</keyword>
<keyword id="KW-0832">Ubl conjugation</keyword>
<accession>Q9TU47</accession>
<accession>Q2TBM1</accession>
<gene>
    <name evidence="3" type="primary">EIF6</name>
    <name evidence="3" type="synonym">ITGB4BP</name>
</gene>
<sequence length="245" mass="26513">MAVRASFENNCEIGCFAKLTNSYCLVAIGGSENFYSVFEGELAGTIPVVHASIAGCRIIGRMCVGNRHGLLVPNNTTDQELQHIRNCLPDSVQIRRVEERLSALGNVTTCNDYVALVHPDLDRETEEILADVLKVEVFRQTVADQVLVGSYCVFSNQGGLVHPKTSIEDQDELSSLLQVPLVAGTVNRGSEVIAAGMVVNDWCAFCGLDTTSTELSVVESVFKLNEAQPSTIATSMRDSLIDSLT</sequence>